<accession>Q9UVG5</accession>
<accession>G8YU31</accession>
<comment type="subcellular location">
    <subcellularLocation>
        <location>Membrane</location>
        <topology>Multi-pass membrane protein</topology>
    </subcellularLocation>
</comment>
<comment type="similarity">
    <text evidence="3">Belongs to the ThrE exporter (TC 2.A.79) family.</text>
</comment>
<comment type="sequence caution" evidence="3">
    <conflict type="frameshift">
        <sequence resource="EMBL-CDS" id="CAB62252"/>
    </conflict>
</comment>
<organism>
    <name type="scientific">Pichia sorbitophila (strain ATCC MYA-4447 / BCRC 22081 / CBS 7064 / NBRC 10061 / NRRL Y-12695)</name>
    <name type="common">Hybrid yeast</name>
    <dbReference type="NCBI Taxonomy" id="559304"/>
    <lineage>
        <taxon>Eukaryota</taxon>
        <taxon>Fungi</taxon>
        <taxon>Dikarya</taxon>
        <taxon>Ascomycota</taxon>
        <taxon>Saccharomycotina</taxon>
        <taxon>Pichiomycetes</taxon>
        <taxon>Debaryomycetaceae</taxon>
        <taxon>Millerozyma</taxon>
    </lineage>
</organism>
<keyword id="KW-0472">Membrane</keyword>
<keyword id="KW-1185">Reference proteome</keyword>
<keyword id="KW-0812">Transmembrane</keyword>
<keyword id="KW-1133">Transmembrane helix</keyword>
<proteinExistence type="inferred from homology"/>
<reference key="1">
    <citation type="journal article" date="2012" name="G3 (Bethesda)">
        <title>Pichia sorbitophila, an interspecies yeast hybrid reveals early steps of genome resolution following polyploidization.</title>
        <authorList>
            <person name="Leh Louis V."/>
            <person name="Despons L."/>
            <person name="Friedrich A."/>
            <person name="Martin T."/>
            <person name="Durrens P."/>
            <person name="Casaregola S."/>
            <person name="Neuveglise C."/>
            <person name="Fairhead C."/>
            <person name="Marck C."/>
            <person name="Cruz J.A."/>
            <person name="Straub M.-L."/>
            <person name="Kugler V."/>
            <person name="Sacerdot C."/>
            <person name="Uzunov Z."/>
            <person name="Thierry A."/>
            <person name="Weiss S."/>
            <person name="Bleykasten C."/>
            <person name="De Montigny J."/>
            <person name="Jacques N."/>
            <person name="Jung P."/>
            <person name="Lemaire M."/>
            <person name="Mallet S."/>
            <person name="Morel G."/>
            <person name="Richard G.-F."/>
            <person name="Sarkar A."/>
            <person name="Savel G."/>
            <person name="Schacherer J."/>
            <person name="Seret M.-L."/>
            <person name="Talla E."/>
            <person name="Samson G."/>
            <person name="Jubin C."/>
            <person name="Poulain J."/>
            <person name="Vacherie B."/>
            <person name="Barbe V."/>
            <person name="Pelletier E."/>
            <person name="Sherman D.J."/>
            <person name="Westhof E."/>
            <person name="Weissenbach J."/>
            <person name="Baret P.V."/>
            <person name="Wincker P."/>
            <person name="Gaillardin C."/>
            <person name="Dujon B."/>
            <person name="Souciet J.-L."/>
        </authorList>
    </citation>
    <scope>NUCLEOTIDE SEQUENCE [LARGE SCALE GENOMIC DNA]</scope>
    <source>
        <strain>ATCC MYA-4447 / BCRC 22081 / CBS 7064 / NBRC 10061 / NRRL Y-12695</strain>
    </source>
</reference>
<reference key="2">
    <citation type="journal article" date="2000" name="Yeast">
        <title>Organization of specific genomic regions of Zygosaccharomyces rouxii and Pichia sorbitophila: comparison with Saccharomyces cerevisiae.</title>
        <authorList>
            <person name="Sychrova H."/>
            <person name="Braun V."/>
            <person name="Potier S."/>
            <person name="Souciet J.L."/>
        </authorList>
    </citation>
    <scope>NUCLEOTIDE SEQUENCE [GENOMIC DNA] OF 26-995</scope>
    <source>
        <strain>ATCC MYA-4447 / BCRC 22081 / CBS 7064 / NBRC 10061 / NRRL Y-12695</strain>
    </source>
</reference>
<evidence type="ECO:0000255" key="1"/>
<evidence type="ECO:0000256" key="2">
    <source>
        <dbReference type="SAM" id="MobiDB-lite"/>
    </source>
</evidence>
<evidence type="ECO:0000305" key="3"/>
<sequence>MSSHKGDGNDSMSSDEDANEFRSHIQLPRVDLANYRKQHQRGSSKTNIAKAGKKLKGKSVRFPDSYGPRDTILSNSSTTNNSTESSGSSDEECDDPDSRLPSFKFNATDVKGESGDAHEGSDGSSDGGSDDESRGSIKFSDSNDDSDREDERRSRTSRGSVGSSSSKPLKGSDDVNEKETNLDHDYDPQEGGTDITDQWKRTQSVSSSSKSFDGEKHSGIKGIFRKFSLADHHGAHGFSNDYEEPSNSDTFLGRVLSFGSGGGGGGGLIPGASRRSREKEGDEEKEVGGGGEDDGAVEMKRLDFSQLNNEAKKLIAVHVPEAANMDQSFTYDEPNQSAGSSRNSTAPLINPDNAQEADDDHKHTDDEDQGKHGFYAPNLDYIIRGNDDPEDQHLLLDESGEDGYIAPPKQVHAGVLSSLLKLYQNPQDEKSSASLSSRAPSDGKTLAEEQEFGTDMPYHMPTSSLDFTKLKSGPQKLVNKFTHRSNKPQPGKEAEADDEDEDEENPDQAYEKANLPSFQNARPKAPKKTIDPVNVSSKFHKKMKRKKIQQQKLRITVHISDILQRQRFIMMICKALMLYGAPTHRLEEYMTMTSRVLEIDGQFVYFPGCMIVSFGDAATRTSEVHIVRCNQGVNLSKLSDTHTIYKAVIHDLISVDEASQQLETLVRKKNQYSPWLSVFLYGFGSAMVCPFAFGGGWLDIPVTFGVGLCVGYLQFFVSSMSNLYSSVFEITASIVVSFIARGIGSINNSKTFCFSAIAQGSLALILPGYIILCGSLELQSRNIVAGSVRMFYAIIYSLFLGFGITLGAALFGWVYKNSTSDKKCRTSHNVNDKYRILFVPMFTICLGLINQARWRQLPVMMVISCTGYVGTYFAGKHFSNVPEFTAAIGAFIVGILGNVYSRVWKGMAVSAMLPAIFVQVPSGIASQSSLLSGIQSADQITHSNSSSDSSSSDSSSSLSFGSTMVEVSIGISVGLFAAALVVYPFGKRRTGLFTL</sequence>
<gene>
    <name type="ORF">GNLVRS01_PISO0A10120g</name>
    <name type="ORF">GNLVRS01_PISO0B10187g</name>
    <name type="ORF">Piso0_000473</name>
</gene>
<name>PRM10_PICSO</name>
<protein>
    <recommendedName>
        <fullName>Pheromone-regulated membrane protein 10</fullName>
    </recommendedName>
</protein>
<feature type="chain" id="PRO_0000409255" description="Pheromone-regulated membrane protein 10">
    <location>
        <begin position="1"/>
        <end position="995"/>
    </location>
</feature>
<feature type="transmembrane region" description="Helical" evidence="1">
    <location>
        <begin position="678"/>
        <end position="698"/>
    </location>
</feature>
<feature type="transmembrane region" description="Helical" evidence="1">
    <location>
        <begin position="700"/>
        <end position="720"/>
    </location>
</feature>
<feature type="transmembrane region" description="Helical" evidence="1">
    <location>
        <begin position="726"/>
        <end position="746"/>
    </location>
</feature>
<feature type="transmembrane region" description="Helical" evidence="1">
    <location>
        <begin position="752"/>
        <end position="772"/>
    </location>
</feature>
<feature type="transmembrane region" description="Helical" evidence="1">
    <location>
        <begin position="794"/>
        <end position="814"/>
    </location>
</feature>
<feature type="transmembrane region" description="Helical" evidence="1">
    <location>
        <begin position="833"/>
        <end position="850"/>
    </location>
</feature>
<feature type="transmembrane region" description="Helical" evidence="1">
    <location>
        <begin position="858"/>
        <end position="878"/>
    </location>
</feature>
<feature type="transmembrane region" description="Helical" evidence="1">
    <location>
        <begin position="881"/>
        <end position="901"/>
    </location>
</feature>
<feature type="transmembrane region" description="Helical" evidence="1">
    <location>
        <begin position="906"/>
        <end position="926"/>
    </location>
</feature>
<feature type="transmembrane region" description="Helical" evidence="1">
    <location>
        <begin position="965"/>
        <end position="985"/>
    </location>
</feature>
<feature type="region of interest" description="Disordered" evidence="2">
    <location>
        <begin position="1"/>
        <end position="217"/>
    </location>
</feature>
<feature type="region of interest" description="Disordered" evidence="2">
    <location>
        <begin position="253"/>
        <end position="299"/>
    </location>
</feature>
<feature type="region of interest" description="Disordered" evidence="2">
    <location>
        <begin position="326"/>
        <end position="407"/>
    </location>
</feature>
<feature type="region of interest" description="Disordered" evidence="2">
    <location>
        <begin position="425"/>
        <end position="508"/>
    </location>
</feature>
<feature type="compositionally biased region" description="Low complexity" evidence="2">
    <location>
        <begin position="74"/>
        <end position="88"/>
    </location>
</feature>
<feature type="compositionally biased region" description="Basic and acidic residues" evidence="2">
    <location>
        <begin position="110"/>
        <end position="121"/>
    </location>
</feature>
<feature type="compositionally biased region" description="Low complexity" evidence="2">
    <location>
        <begin position="157"/>
        <end position="166"/>
    </location>
</feature>
<feature type="compositionally biased region" description="Basic and acidic residues" evidence="2">
    <location>
        <begin position="170"/>
        <end position="187"/>
    </location>
</feature>
<feature type="compositionally biased region" description="Gly residues" evidence="2">
    <location>
        <begin position="259"/>
        <end position="269"/>
    </location>
</feature>
<feature type="compositionally biased region" description="Acidic residues" evidence="2">
    <location>
        <begin position="283"/>
        <end position="296"/>
    </location>
</feature>
<feature type="compositionally biased region" description="Polar residues" evidence="2">
    <location>
        <begin position="326"/>
        <end position="347"/>
    </location>
</feature>
<feature type="compositionally biased region" description="Basic and acidic residues" evidence="2">
    <location>
        <begin position="359"/>
        <end position="371"/>
    </location>
</feature>
<feature type="compositionally biased region" description="Basic and acidic residues" evidence="2">
    <location>
        <begin position="385"/>
        <end position="396"/>
    </location>
</feature>
<feature type="compositionally biased region" description="Acidic residues" evidence="2">
    <location>
        <begin position="495"/>
        <end position="506"/>
    </location>
</feature>
<dbReference type="EMBL" id="FO082059">
    <property type="protein sequence ID" value="CCE72871.1"/>
    <property type="molecule type" value="Genomic_DNA"/>
</dbReference>
<dbReference type="EMBL" id="FO082058">
    <property type="protein sequence ID" value="CCE73432.1"/>
    <property type="molecule type" value="Genomic_DNA"/>
</dbReference>
<dbReference type="EMBL" id="Y18559">
    <property type="protein sequence ID" value="CAB62252.1"/>
    <property type="status" value="ALT_FRAME"/>
    <property type="molecule type" value="Genomic_DNA"/>
</dbReference>
<dbReference type="STRING" id="559304.Q9UVG5"/>
<dbReference type="eggNOG" id="ENOG502QPMM">
    <property type="taxonomic scope" value="Eukaryota"/>
</dbReference>
<dbReference type="HOGENOM" id="CLU_007078_1_0_1"/>
<dbReference type="InParanoid" id="Q9UVG5"/>
<dbReference type="OMA" id="FVYFPGT"/>
<dbReference type="OrthoDB" id="413008at2759"/>
<dbReference type="Proteomes" id="UP000005222">
    <property type="component" value="Chromosome A"/>
</dbReference>
<dbReference type="Proteomes" id="UP000005222">
    <property type="component" value="Chromosome B"/>
</dbReference>
<dbReference type="GO" id="GO:0016020">
    <property type="term" value="C:membrane"/>
    <property type="evidence" value="ECO:0007669"/>
    <property type="project" value="UniProtKB-SubCell"/>
</dbReference>
<dbReference type="GO" id="GO:0022857">
    <property type="term" value="F:transmembrane transporter activity"/>
    <property type="evidence" value="ECO:0007669"/>
    <property type="project" value="InterPro"/>
</dbReference>
<dbReference type="InterPro" id="IPR010619">
    <property type="entry name" value="ThrE-like_N"/>
</dbReference>
<dbReference type="InterPro" id="IPR051361">
    <property type="entry name" value="ThrE/Ser_Exporter"/>
</dbReference>
<dbReference type="InterPro" id="IPR024528">
    <property type="entry name" value="ThrE_2"/>
</dbReference>
<dbReference type="PANTHER" id="PTHR31082">
    <property type="entry name" value="PHEROMONE-REGULATED MEMBRANE PROTEIN 10"/>
    <property type="match status" value="1"/>
</dbReference>
<dbReference type="PANTHER" id="PTHR31082:SF4">
    <property type="entry name" value="PHEROMONE-REGULATED MEMBRANE PROTEIN 10"/>
    <property type="match status" value="1"/>
</dbReference>
<dbReference type="Pfam" id="PF06738">
    <property type="entry name" value="ThrE"/>
    <property type="match status" value="1"/>
</dbReference>
<dbReference type="Pfam" id="PF12821">
    <property type="entry name" value="ThrE_2"/>
    <property type="match status" value="1"/>
</dbReference>